<sequence length="313" mass="34854">MATKINKAIKISQKHLLGIQDLSINDVNFILEEAKSFIKLNQSKNKRLNVLSGKTQINLFFEPSTRTQSSFELAGKRLGADVMSMNMANSAIKKGETLIDTAMTLNAMHPDIIVIRHQDSGACNLLSQKVNCAVLNAGDGSREHPTQALLDALTIINRKKKIEGLRVAICGDITHSRVARSNIYLLNMLGAEVNIIAPSNLMPKEIEKFGVNTFTDMKKGLKDCDIVMMLRLQNERMTSSFLSSNREYYEYYGLTPDKLAHAKDDALIMHPGPMNRGIEIDTKLADDINRSVIKEQVELGVAVRMACLKIFCE</sequence>
<keyword id="KW-0665">Pyrimidine biosynthesis</keyword>
<keyword id="KW-1185">Reference proteome</keyword>
<keyword id="KW-0808">Transferase</keyword>
<organism>
    <name type="scientific">Pelagibacter ubique (strain HTCC1062)</name>
    <dbReference type="NCBI Taxonomy" id="335992"/>
    <lineage>
        <taxon>Bacteria</taxon>
        <taxon>Pseudomonadati</taxon>
        <taxon>Pseudomonadota</taxon>
        <taxon>Alphaproteobacteria</taxon>
        <taxon>Candidatus Pelagibacterales</taxon>
        <taxon>Candidatus Pelagibacteraceae</taxon>
        <taxon>Candidatus Pelagibacter</taxon>
    </lineage>
</organism>
<feature type="chain" id="PRO_0000321132" description="Aspartate carbamoyltransferase catalytic subunit">
    <location>
        <begin position="1"/>
        <end position="313"/>
    </location>
</feature>
<feature type="binding site" evidence="1">
    <location>
        <position position="66"/>
    </location>
    <ligand>
        <name>carbamoyl phosphate</name>
        <dbReference type="ChEBI" id="CHEBI:58228"/>
    </ligand>
</feature>
<feature type="binding site" evidence="1">
    <location>
        <position position="67"/>
    </location>
    <ligand>
        <name>carbamoyl phosphate</name>
        <dbReference type="ChEBI" id="CHEBI:58228"/>
    </ligand>
</feature>
<feature type="binding site" evidence="1">
    <location>
        <position position="94"/>
    </location>
    <ligand>
        <name>L-aspartate</name>
        <dbReference type="ChEBI" id="CHEBI:29991"/>
    </ligand>
</feature>
<feature type="binding site" evidence="1">
    <location>
        <position position="116"/>
    </location>
    <ligand>
        <name>carbamoyl phosphate</name>
        <dbReference type="ChEBI" id="CHEBI:58228"/>
    </ligand>
</feature>
<feature type="binding site" evidence="1">
    <location>
        <position position="144"/>
    </location>
    <ligand>
        <name>carbamoyl phosphate</name>
        <dbReference type="ChEBI" id="CHEBI:58228"/>
    </ligand>
</feature>
<feature type="binding site" evidence="1">
    <location>
        <position position="147"/>
    </location>
    <ligand>
        <name>carbamoyl phosphate</name>
        <dbReference type="ChEBI" id="CHEBI:58228"/>
    </ligand>
</feature>
<feature type="binding site" evidence="1">
    <location>
        <position position="177"/>
    </location>
    <ligand>
        <name>L-aspartate</name>
        <dbReference type="ChEBI" id="CHEBI:29991"/>
    </ligand>
</feature>
<feature type="binding site" evidence="1">
    <location>
        <position position="231"/>
    </location>
    <ligand>
        <name>L-aspartate</name>
        <dbReference type="ChEBI" id="CHEBI:29991"/>
    </ligand>
</feature>
<feature type="binding site" evidence="1">
    <location>
        <position position="272"/>
    </location>
    <ligand>
        <name>carbamoyl phosphate</name>
        <dbReference type="ChEBI" id="CHEBI:58228"/>
    </ligand>
</feature>
<feature type="binding site" evidence="1">
    <location>
        <position position="273"/>
    </location>
    <ligand>
        <name>carbamoyl phosphate</name>
        <dbReference type="ChEBI" id="CHEBI:58228"/>
    </ligand>
</feature>
<protein>
    <recommendedName>
        <fullName evidence="1">Aspartate carbamoyltransferase catalytic subunit</fullName>
        <ecNumber evidence="1">2.1.3.2</ecNumber>
    </recommendedName>
    <alternativeName>
        <fullName evidence="1">Aspartate transcarbamylase</fullName>
        <shortName evidence="1">ATCase</shortName>
    </alternativeName>
</protein>
<proteinExistence type="inferred from homology"/>
<dbReference type="EC" id="2.1.3.2" evidence="1"/>
<dbReference type="EMBL" id="CP000084">
    <property type="protein sequence ID" value="AAZ21884.1"/>
    <property type="molecule type" value="Genomic_DNA"/>
</dbReference>
<dbReference type="RefSeq" id="WP_006996847.1">
    <property type="nucleotide sequence ID" value="NC_007205.1"/>
</dbReference>
<dbReference type="SMR" id="Q4FLQ4"/>
<dbReference type="STRING" id="335992.SAR11_1080"/>
<dbReference type="GeneID" id="66295570"/>
<dbReference type="KEGG" id="pub:SAR11_1080"/>
<dbReference type="eggNOG" id="COG0540">
    <property type="taxonomic scope" value="Bacteria"/>
</dbReference>
<dbReference type="HOGENOM" id="CLU_043846_2_0_5"/>
<dbReference type="OrthoDB" id="9774690at2"/>
<dbReference type="UniPathway" id="UPA00070">
    <property type="reaction ID" value="UER00116"/>
</dbReference>
<dbReference type="Proteomes" id="UP000002528">
    <property type="component" value="Chromosome"/>
</dbReference>
<dbReference type="GO" id="GO:0005829">
    <property type="term" value="C:cytosol"/>
    <property type="evidence" value="ECO:0007669"/>
    <property type="project" value="TreeGrafter"/>
</dbReference>
<dbReference type="GO" id="GO:0016597">
    <property type="term" value="F:amino acid binding"/>
    <property type="evidence" value="ECO:0007669"/>
    <property type="project" value="InterPro"/>
</dbReference>
<dbReference type="GO" id="GO:0004070">
    <property type="term" value="F:aspartate carbamoyltransferase activity"/>
    <property type="evidence" value="ECO:0007669"/>
    <property type="project" value="UniProtKB-UniRule"/>
</dbReference>
<dbReference type="GO" id="GO:0006207">
    <property type="term" value="P:'de novo' pyrimidine nucleobase biosynthetic process"/>
    <property type="evidence" value="ECO:0007669"/>
    <property type="project" value="InterPro"/>
</dbReference>
<dbReference type="GO" id="GO:0044205">
    <property type="term" value="P:'de novo' UMP biosynthetic process"/>
    <property type="evidence" value="ECO:0007669"/>
    <property type="project" value="UniProtKB-UniRule"/>
</dbReference>
<dbReference type="GO" id="GO:0006520">
    <property type="term" value="P:amino acid metabolic process"/>
    <property type="evidence" value="ECO:0007669"/>
    <property type="project" value="InterPro"/>
</dbReference>
<dbReference type="FunFam" id="3.40.50.1370:FF:000007">
    <property type="entry name" value="Aspartate carbamoyltransferase"/>
    <property type="match status" value="1"/>
</dbReference>
<dbReference type="Gene3D" id="3.40.50.1370">
    <property type="entry name" value="Aspartate/ornithine carbamoyltransferase"/>
    <property type="match status" value="2"/>
</dbReference>
<dbReference type="HAMAP" id="MF_00001">
    <property type="entry name" value="Asp_carb_tr"/>
    <property type="match status" value="1"/>
</dbReference>
<dbReference type="InterPro" id="IPR006132">
    <property type="entry name" value="Asp/Orn_carbamoyltranf_P-bd"/>
</dbReference>
<dbReference type="InterPro" id="IPR006130">
    <property type="entry name" value="Asp/Orn_carbamoylTrfase"/>
</dbReference>
<dbReference type="InterPro" id="IPR036901">
    <property type="entry name" value="Asp/Orn_carbamoylTrfase_sf"/>
</dbReference>
<dbReference type="InterPro" id="IPR002082">
    <property type="entry name" value="Asp_carbamoyltransf"/>
</dbReference>
<dbReference type="InterPro" id="IPR006131">
    <property type="entry name" value="Asp_carbamoyltransf_Asp/Orn-bd"/>
</dbReference>
<dbReference type="NCBIfam" id="TIGR00670">
    <property type="entry name" value="asp_carb_tr"/>
    <property type="match status" value="1"/>
</dbReference>
<dbReference type="NCBIfam" id="NF002032">
    <property type="entry name" value="PRK00856.1"/>
    <property type="match status" value="1"/>
</dbReference>
<dbReference type="PANTHER" id="PTHR45753:SF6">
    <property type="entry name" value="ASPARTATE CARBAMOYLTRANSFERASE"/>
    <property type="match status" value="1"/>
</dbReference>
<dbReference type="PANTHER" id="PTHR45753">
    <property type="entry name" value="ORNITHINE CARBAMOYLTRANSFERASE, MITOCHONDRIAL"/>
    <property type="match status" value="1"/>
</dbReference>
<dbReference type="Pfam" id="PF00185">
    <property type="entry name" value="OTCace"/>
    <property type="match status" value="1"/>
</dbReference>
<dbReference type="Pfam" id="PF02729">
    <property type="entry name" value="OTCace_N"/>
    <property type="match status" value="1"/>
</dbReference>
<dbReference type="PRINTS" id="PR00100">
    <property type="entry name" value="AOTCASE"/>
</dbReference>
<dbReference type="PRINTS" id="PR00101">
    <property type="entry name" value="ATCASE"/>
</dbReference>
<dbReference type="SUPFAM" id="SSF53671">
    <property type="entry name" value="Aspartate/ornithine carbamoyltransferase"/>
    <property type="match status" value="1"/>
</dbReference>
<dbReference type="PROSITE" id="PS00097">
    <property type="entry name" value="CARBAMOYLTRANSFERASE"/>
    <property type="match status" value="1"/>
</dbReference>
<name>PYRB_PELUB</name>
<evidence type="ECO:0000255" key="1">
    <source>
        <dbReference type="HAMAP-Rule" id="MF_00001"/>
    </source>
</evidence>
<accession>Q4FLQ4</accession>
<gene>
    <name evidence="1" type="primary">pyrB</name>
    <name type="ordered locus">SAR11_1080</name>
</gene>
<reference key="1">
    <citation type="journal article" date="2005" name="Science">
        <title>Genome streamlining in a cosmopolitan oceanic bacterium.</title>
        <authorList>
            <person name="Giovannoni S.J."/>
            <person name="Tripp H.J."/>
            <person name="Givan S."/>
            <person name="Podar M."/>
            <person name="Vergin K.L."/>
            <person name="Baptista D."/>
            <person name="Bibbs L."/>
            <person name="Eads J."/>
            <person name="Richardson T.H."/>
            <person name="Noordewier M."/>
            <person name="Rappe M.S."/>
            <person name="Short J.M."/>
            <person name="Carrington J.C."/>
            <person name="Mathur E.J."/>
        </authorList>
    </citation>
    <scope>NUCLEOTIDE SEQUENCE [LARGE SCALE GENOMIC DNA]</scope>
    <source>
        <strain>HTCC1062</strain>
    </source>
</reference>
<comment type="function">
    <text evidence="1">Catalyzes the condensation of carbamoyl phosphate and aspartate to form carbamoyl aspartate and inorganic phosphate, the committed step in the de novo pyrimidine nucleotide biosynthesis pathway.</text>
</comment>
<comment type="catalytic activity">
    <reaction evidence="1">
        <text>carbamoyl phosphate + L-aspartate = N-carbamoyl-L-aspartate + phosphate + H(+)</text>
        <dbReference type="Rhea" id="RHEA:20013"/>
        <dbReference type="ChEBI" id="CHEBI:15378"/>
        <dbReference type="ChEBI" id="CHEBI:29991"/>
        <dbReference type="ChEBI" id="CHEBI:32814"/>
        <dbReference type="ChEBI" id="CHEBI:43474"/>
        <dbReference type="ChEBI" id="CHEBI:58228"/>
        <dbReference type="EC" id="2.1.3.2"/>
    </reaction>
</comment>
<comment type="pathway">
    <text evidence="1">Pyrimidine metabolism; UMP biosynthesis via de novo pathway; (S)-dihydroorotate from bicarbonate: step 2/3.</text>
</comment>
<comment type="subunit">
    <text evidence="1">Heterododecamer (2C3:3R2) of six catalytic PyrB chains organized as two trimers (C3), and six regulatory PyrI chains organized as three dimers (R2).</text>
</comment>
<comment type="similarity">
    <text evidence="1">Belongs to the aspartate/ornithine carbamoyltransferase superfamily. ATCase family.</text>
</comment>